<reference key="1">
    <citation type="journal article" date="1995" name="Gene">
        <title>Cloning and expression of the NaeI restriction endonuclease-encoding gene and sequence analysis of the NaeI restriction-modification system.</title>
        <authorList>
            <person name="Taron C.H."/>
            <person name="van Cott E.M."/>
            <person name="Wilson G.G."/>
            <person name="Moran L.S."/>
            <person name="Slatko B.E."/>
            <person name="Hornstra L.J."/>
            <person name="Benner J.S."/>
            <person name="Kucera R.B."/>
            <person name="Guthrie E.P."/>
        </authorList>
    </citation>
    <scope>NUCLEOTIDE SEQUENCE [GENOMIC DNA]</scope>
    <scope>FUNCTION</scope>
    <source>
        <strain>ATCC 23870 / DSM 40034 / BCRC 13661 / CBS 609.68 / CIP 107109 / JCM 4614 / KCTC 9379 / NBRC 13195 / NCIMB 12944 / NRRL B-3298 / 701</strain>
    </source>
</reference>
<reference key="2">
    <citation type="journal article" date="2003" name="Nucleic Acids Res.">
        <title>A nomenclature for restriction enzymes, DNA methyltransferases, homing endonucleases and their genes.</title>
        <authorList>
            <person name="Roberts R.J."/>
            <person name="Belfort M."/>
            <person name="Bestor T."/>
            <person name="Bhagwat A.S."/>
            <person name="Bickle T.A."/>
            <person name="Bitinaite J."/>
            <person name="Blumenthal R.M."/>
            <person name="Degtyarev S.K."/>
            <person name="Dryden D.T."/>
            <person name="Dybvig K."/>
            <person name="Firman K."/>
            <person name="Gromova E.S."/>
            <person name="Gumport R.I."/>
            <person name="Halford S.E."/>
            <person name="Hattman S."/>
            <person name="Heitman J."/>
            <person name="Hornby D.P."/>
            <person name="Janulaitis A."/>
            <person name="Jeltsch A."/>
            <person name="Josephsen J."/>
            <person name="Kiss A."/>
            <person name="Klaenhammer T.R."/>
            <person name="Kobayashi I."/>
            <person name="Kong H."/>
            <person name="Krueger D.H."/>
            <person name="Lacks S."/>
            <person name="Marinus M.G."/>
            <person name="Miyahara M."/>
            <person name="Morgan R.D."/>
            <person name="Murray N.E."/>
            <person name="Nagaraja V."/>
            <person name="Piekarowicz A."/>
            <person name="Pingoud A."/>
            <person name="Raleigh E."/>
            <person name="Rao D.N."/>
            <person name="Reich N."/>
            <person name="Repin V.E."/>
            <person name="Selker E.U."/>
            <person name="Shaw P.C."/>
            <person name="Stein D.C."/>
            <person name="Stoddard B.L."/>
            <person name="Szybalski W."/>
            <person name="Trautner T.A."/>
            <person name="Van Etten J.L."/>
            <person name="Vitor J.M."/>
            <person name="Wilson G.G."/>
            <person name="Xu S.Y."/>
        </authorList>
    </citation>
    <scope>NOMENCLATURE</scope>
</reference>
<organism>
    <name type="scientific">Lentzea aerocolonigenes</name>
    <name type="common">Lechevalieria aerocolonigenes</name>
    <name type="synonym">Saccharothrix aerocolonigenes</name>
    <dbReference type="NCBI Taxonomy" id="68170"/>
    <lineage>
        <taxon>Bacteria</taxon>
        <taxon>Bacillati</taxon>
        <taxon>Actinomycetota</taxon>
        <taxon>Actinomycetes</taxon>
        <taxon>Pseudonocardiales</taxon>
        <taxon>Pseudonocardiaceae</taxon>
        <taxon>Lentzea</taxon>
    </lineage>
</organism>
<feature type="chain" id="PRO_0000087903" description="Type II methyltransferase M.NaeI">
    <location>
        <begin position="1"/>
        <end position="413"/>
    </location>
</feature>
<feature type="domain" description="SAM-dependent MTase C5-type" evidence="1">
    <location>
        <begin position="4"/>
        <end position="317"/>
    </location>
</feature>
<feature type="active site" evidence="1 2">
    <location>
        <position position="78"/>
    </location>
</feature>
<sequence length="413" mass="45180">MQSLEVVEICAGAGGQALGLEKAGFSHRLAVELDVNAAATLRKNLKSDVVITGDVADPSVLNPMEHLGVSLLAGGVPCPPFSIAGKQLGADDMRDLFAWAVELCDVMKPRALMLENVRGLSMPRFAGYRQHVLDRLNDMGYVAEWRLLHASDFGVPQLRPRFVLVALQNKFAPYFTWPEPTGAAPTVGETLKDLMAADGWEGAEEWAAQANDIAPTIVGGSKKHGGADLGPTRAKRAWAELGVDAMGVADAPPQPGDKFKVGPKLTCEMVARIQGWRDGEWIFEGRKTSRYRQIGNAFPPPVAEAIGKRIRAALNMEGEGRDRAVDSDHNPLYRALKESGDFMTHRQLERAVGRPIEAYELERTISDLGRDFEVETKDGASAMAYKLGPFKAFTGQEGHLRHEMFVRHRTKIS</sequence>
<keyword id="KW-0238">DNA-binding</keyword>
<keyword id="KW-0489">Methyltransferase</keyword>
<keyword id="KW-0680">Restriction system</keyword>
<keyword id="KW-0949">S-adenosyl-L-methionine</keyword>
<keyword id="KW-0808">Transferase</keyword>
<comment type="function">
    <text evidence="3 5">A methylase that recognizes the double-stranded sequence 5'-GCCGGC-3', methylates C-? on both strands, and protects the DNA from cleavage by the NaeI endonuclease.</text>
</comment>
<comment type="catalytic activity">
    <reaction evidence="2">
        <text>a 2'-deoxycytidine in DNA + S-adenosyl-L-methionine = a 5-methyl-2'-deoxycytidine in DNA + S-adenosyl-L-homocysteine + H(+)</text>
        <dbReference type="Rhea" id="RHEA:13681"/>
        <dbReference type="Rhea" id="RHEA-COMP:11369"/>
        <dbReference type="Rhea" id="RHEA-COMP:11370"/>
        <dbReference type="ChEBI" id="CHEBI:15378"/>
        <dbReference type="ChEBI" id="CHEBI:57856"/>
        <dbReference type="ChEBI" id="CHEBI:59789"/>
        <dbReference type="ChEBI" id="CHEBI:85452"/>
        <dbReference type="ChEBI" id="CHEBI:85454"/>
        <dbReference type="EC" id="2.1.1.37"/>
    </reaction>
</comment>
<comment type="similarity">
    <text evidence="1">Belongs to the class I-like SAM-binding methyltransferase superfamily. C5-methyltransferase family.</text>
</comment>
<gene>
    <name evidence="4" type="primary">naeIM</name>
</gene>
<protein>
    <recommendedName>
        <fullName evidence="3">Type II methyltransferase M.NaeI</fullName>
        <shortName evidence="4">M.NaeI</shortName>
        <ecNumber>2.1.1.37</ecNumber>
    </recommendedName>
    <alternativeName>
        <fullName>Cytosine-specific methyltransferase NaeI</fullName>
    </alternativeName>
    <alternativeName>
        <fullName>Modification methylase NaeI</fullName>
    </alternativeName>
</protein>
<proteinExistence type="inferred from homology"/>
<accession>P50188</accession>
<evidence type="ECO:0000255" key="1">
    <source>
        <dbReference type="PROSITE-ProRule" id="PRU01016"/>
    </source>
</evidence>
<evidence type="ECO:0000255" key="2">
    <source>
        <dbReference type="PROSITE-ProRule" id="PRU10018"/>
    </source>
</evidence>
<evidence type="ECO:0000303" key="3">
    <source>
    </source>
</evidence>
<evidence type="ECO:0000303" key="4">
    <source>
    </source>
</evidence>
<evidence type="ECO:0000305" key="5">
    <source>
    </source>
</evidence>
<dbReference type="EC" id="2.1.1.37"/>
<dbReference type="EMBL" id="U09581">
    <property type="protein sequence ID" value="AAC43325.1"/>
    <property type="molecule type" value="Genomic_DNA"/>
</dbReference>
<dbReference type="RefSeq" id="WP_030468108.1">
    <property type="nucleotide sequence ID" value="NZ_BBOJ01000008.1"/>
</dbReference>
<dbReference type="SMR" id="P50188"/>
<dbReference type="STRING" id="68170.GCA_000974445_06524"/>
<dbReference type="REBASE" id="3452">
    <property type="entry name" value="M.NaeI"/>
</dbReference>
<dbReference type="OrthoDB" id="9813719at2"/>
<dbReference type="PRO" id="PR:P50188"/>
<dbReference type="GO" id="GO:0003886">
    <property type="term" value="F:DNA (cytosine-5-)-methyltransferase activity"/>
    <property type="evidence" value="ECO:0007669"/>
    <property type="project" value="UniProtKB-EC"/>
</dbReference>
<dbReference type="GO" id="GO:0003677">
    <property type="term" value="F:DNA binding"/>
    <property type="evidence" value="ECO:0007669"/>
    <property type="project" value="UniProtKB-KW"/>
</dbReference>
<dbReference type="GO" id="GO:0009307">
    <property type="term" value="P:DNA restriction-modification system"/>
    <property type="evidence" value="ECO:0007669"/>
    <property type="project" value="UniProtKB-KW"/>
</dbReference>
<dbReference type="GO" id="GO:0032259">
    <property type="term" value="P:methylation"/>
    <property type="evidence" value="ECO:0007669"/>
    <property type="project" value="UniProtKB-KW"/>
</dbReference>
<dbReference type="GO" id="GO:0044027">
    <property type="term" value="P:negative regulation of gene expression via chromosomal CpG island methylation"/>
    <property type="evidence" value="ECO:0007669"/>
    <property type="project" value="TreeGrafter"/>
</dbReference>
<dbReference type="Gene3D" id="3.90.120.10">
    <property type="entry name" value="DNA Methylase, subunit A, domain 2"/>
    <property type="match status" value="1"/>
</dbReference>
<dbReference type="Gene3D" id="3.40.50.150">
    <property type="entry name" value="Vaccinia Virus protein VP39"/>
    <property type="match status" value="1"/>
</dbReference>
<dbReference type="InterPro" id="IPR050390">
    <property type="entry name" value="C5-Methyltransferase"/>
</dbReference>
<dbReference type="InterPro" id="IPR018117">
    <property type="entry name" value="C5_DNA_meth_AS"/>
</dbReference>
<dbReference type="InterPro" id="IPR001525">
    <property type="entry name" value="C5_MeTfrase"/>
</dbReference>
<dbReference type="InterPro" id="IPR031303">
    <property type="entry name" value="C5_meth_CS"/>
</dbReference>
<dbReference type="InterPro" id="IPR029063">
    <property type="entry name" value="SAM-dependent_MTases_sf"/>
</dbReference>
<dbReference type="NCBIfam" id="TIGR00675">
    <property type="entry name" value="dcm"/>
    <property type="match status" value="1"/>
</dbReference>
<dbReference type="PANTHER" id="PTHR10629">
    <property type="entry name" value="CYTOSINE-SPECIFIC METHYLTRANSFERASE"/>
    <property type="match status" value="1"/>
</dbReference>
<dbReference type="PANTHER" id="PTHR10629:SF52">
    <property type="entry name" value="DNA (CYTOSINE-5)-METHYLTRANSFERASE 1"/>
    <property type="match status" value="1"/>
</dbReference>
<dbReference type="Pfam" id="PF00145">
    <property type="entry name" value="DNA_methylase"/>
    <property type="match status" value="1"/>
</dbReference>
<dbReference type="PRINTS" id="PR00105">
    <property type="entry name" value="C5METTRFRASE"/>
</dbReference>
<dbReference type="SUPFAM" id="SSF53335">
    <property type="entry name" value="S-adenosyl-L-methionine-dependent methyltransferases"/>
    <property type="match status" value="1"/>
</dbReference>
<dbReference type="PROSITE" id="PS00094">
    <property type="entry name" value="C5_MTASE_1"/>
    <property type="match status" value="1"/>
</dbReference>
<dbReference type="PROSITE" id="PS00095">
    <property type="entry name" value="C5_MTASE_2"/>
    <property type="match status" value="1"/>
</dbReference>
<dbReference type="PROSITE" id="PS51679">
    <property type="entry name" value="SAM_MT_C5"/>
    <property type="match status" value="1"/>
</dbReference>
<name>MTN1_LENAE</name>